<sequence>MNTSLRLNHYWITCADGLETLLQEEIEQLGTKVTERKAGRLIIEGTLEHAYRICMWSRLASRVLLPIHTYELERTHDARDVAEELYEGAISFDWSLIFAPQSTFAIRLHAEREIKVNTQFATLRVKDGVVDSFMEAVGRRPSIDTKQPEITLYVLAGKTEHTYCLDLSGDSLHKRGYRRFMTDAPIKENLAAAILQKAKLQERNPEIVLDPMCGSGTFIIEALMILTDRAPGLVRRFGFNGWHGHDRELWLSLKAEAAERHEKALEQPLPKFYAYDADWEAVKATRENIIAAGFEKLLGDIQIEERTLADWPDFGAENKTAFIVTNPPYGERLGDKASNRSLYLGLSALLQKNFPNQYAAIIAAQIEQADVLAFEAPETLRLMNGKLPIYVRFGTVKLEKVTQPFLANWQAQPVEMEEAQDFANRLQKNMTALKKWATKENIYCLRLYDADLPDFNLAVDLYSDRLHVQEYAPPKKIDPEKAKKRFNLALAAIRAVTGLNRDAIFIKTRARQTGTNQYTKQSTANKRFIVQEGKAKILVNLTDYLDTGLFLDHRQMRLRIAQEARGKHFLNLYSYTSTASLHAALGGAASTTSVDLSNTYLSWSKENFVLNGLTVDHADEQHMFFASDCFEWLKEGHEQYDLIFIDPPTFSNSKKFHGTFDVQRDHVSLIKRAMNRLTSEGTLYFSNNYRGFEMDEEIEALYDVEEITSETIGPDFKRNQKIHRAWKIQHPGLN</sequence>
<organism>
    <name type="scientific">Acinetobacter baumannii (strain SDF)</name>
    <dbReference type="NCBI Taxonomy" id="509170"/>
    <lineage>
        <taxon>Bacteria</taxon>
        <taxon>Pseudomonadati</taxon>
        <taxon>Pseudomonadota</taxon>
        <taxon>Gammaproteobacteria</taxon>
        <taxon>Moraxellales</taxon>
        <taxon>Moraxellaceae</taxon>
        <taxon>Acinetobacter</taxon>
        <taxon>Acinetobacter calcoaceticus/baumannii complex</taxon>
    </lineage>
</organism>
<comment type="function">
    <text evidence="1">Specifically methylates the guanine in position 2445 (m2G2445) and the guanine in position 2069 (m7G2069) of 23S rRNA.</text>
</comment>
<comment type="catalytic activity">
    <reaction evidence="1">
        <text>guanosine(2445) in 23S rRNA + S-adenosyl-L-methionine = N(2)-methylguanosine(2445) in 23S rRNA + S-adenosyl-L-homocysteine + H(+)</text>
        <dbReference type="Rhea" id="RHEA:42740"/>
        <dbReference type="Rhea" id="RHEA-COMP:10215"/>
        <dbReference type="Rhea" id="RHEA-COMP:10216"/>
        <dbReference type="ChEBI" id="CHEBI:15378"/>
        <dbReference type="ChEBI" id="CHEBI:57856"/>
        <dbReference type="ChEBI" id="CHEBI:59789"/>
        <dbReference type="ChEBI" id="CHEBI:74269"/>
        <dbReference type="ChEBI" id="CHEBI:74481"/>
        <dbReference type="EC" id="2.1.1.173"/>
    </reaction>
</comment>
<comment type="catalytic activity">
    <reaction evidence="1">
        <text>guanosine(2069) in 23S rRNA + S-adenosyl-L-methionine = N(2)-methylguanosine(2069) in 23S rRNA + S-adenosyl-L-homocysteine + H(+)</text>
        <dbReference type="Rhea" id="RHEA:43772"/>
        <dbReference type="Rhea" id="RHEA-COMP:10688"/>
        <dbReference type="Rhea" id="RHEA-COMP:10689"/>
        <dbReference type="ChEBI" id="CHEBI:15378"/>
        <dbReference type="ChEBI" id="CHEBI:57856"/>
        <dbReference type="ChEBI" id="CHEBI:59789"/>
        <dbReference type="ChEBI" id="CHEBI:74269"/>
        <dbReference type="ChEBI" id="CHEBI:74481"/>
        <dbReference type="EC" id="2.1.1.264"/>
    </reaction>
</comment>
<comment type="subcellular location">
    <subcellularLocation>
        <location evidence="1">Cytoplasm</location>
    </subcellularLocation>
</comment>
<comment type="similarity">
    <text evidence="1">Belongs to the methyltransferase superfamily. RlmKL family.</text>
</comment>
<feature type="chain" id="PRO_0000366716" description="Ribosomal RNA large subunit methyltransferase K/L">
    <location>
        <begin position="1"/>
        <end position="734"/>
    </location>
</feature>
<feature type="domain" description="THUMP" evidence="1">
    <location>
        <begin position="49"/>
        <end position="167"/>
    </location>
</feature>
<reference key="1">
    <citation type="journal article" date="2008" name="PLoS ONE">
        <title>Comparative analysis of Acinetobacters: three genomes for three lifestyles.</title>
        <authorList>
            <person name="Vallenet D."/>
            <person name="Nordmann P."/>
            <person name="Barbe V."/>
            <person name="Poirel L."/>
            <person name="Mangenot S."/>
            <person name="Bataille E."/>
            <person name="Dossat C."/>
            <person name="Gas S."/>
            <person name="Kreimeyer A."/>
            <person name="Lenoble P."/>
            <person name="Oztas S."/>
            <person name="Poulain J."/>
            <person name="Segurens B."/>
            <person name="Robert C."/>
            <person name="Abergel C."/>
            <person name="Claverie J.-M."/>
            <person name="Raoult D."/>
            <person name="Medigue C."/>
            <person name="Weissenbach J."/>
            <person name="Cruveiller S."/>
        </authorList>
    </citation>
    <scope>NUCLEOTIDE SEQUENCE [LARGE SCALE GENOMIC DNA]</scope>
    <source>
        <strain>SDF</strain>
    </source>
</reference>
<gene>
    <name evidence="1" type="primary">rlmL</name>
    <name type="ordered locus">ABSDF1475</name>
</gene>
<proteinExistence type="inferred from homology"/>
<keyword id="KW-0963">Cytoplasm</keyword>
<keyword id="KW-0489">Methyltransferase</keyword>
<keyword id="KW-0694">RNA-binding</keyword>
<keyword id="KW-0698">rRNA processing</keyword>
<keyword id="KW-0949">S-adenosyl-L-methionine</keyword>
<keyword id="KW-0808">Transferase</keyword>
<dbReference type="EC" id="2.1.1.173" evidence="1"/>
<dbReference type="EC" id="2.1.1.264" evidence="1"/>
<dbReference type="EMBL" id="CU468230">
    <property type="protein sequence ID" value="CAP00819.1"/>
    <property type="molecule type" value="Genomic_DNA"/>
</dbReference>
<dbReference type="SMR" id="B0VLH0"/>
<dbReference type="KEGG" id="abm:ABSDF1475"/>
<dbReference type="HOGENOM" id="CLU_014042_2_0_6"/>
<dbReference type="Proteomes" id="UP000001741">
    <property type="component" value="Chromosome"/>
</dbReference>
<dbReference type="GO" id="GO:0005737">
    <property type="term" value="C:cytoplasm"/>
    <property type="evidence" value="ECO:0007669"/>
    <property type="project" value="UniProtKB-SubCell"/>
</dbReference>
<dbReference type="GO" id="GO:0052915">
    <property type="term" value="F:23S rRNA (guanine(2445)-N(2))-methyltransferase activity"/>
    <property type="evidence" value="ECO:0007669"/>
    <property type="project" value="UniProtKB-UniRule"/>
</dbReference>
<dbReference type="GO" id="GO:0003723">
    <property type="term" value="F:RNA binding"/>
    <property type="evidence" value="ECO:0007669"/>
    <property type="project" value="UniProtKB-KW"/>
</dbReference>
<dbReference type="GO" id="GO:0070043">
    <property type="term" value="F:rRNA (guanine-N7-)-methyltransferase activity"/>
    <property type="evidence" value="ECO:0007669"/>
    <property type="project" value="UniProtKB-UniRule"/>
</dbReference>
<dbReference type="CDD" id="cd02440">
    <property type="entry name" value="AdoMet_MTases"/>
    <property type="match status" value="1"/>
</dbReference>
<dbReference type="CDD" id="cd11715">
    <property type="entry name" value="THUMP_AdoMetMT"/>
    <property type="match status" value="1"/>
</dbReference>
<dbReference type="Gene3D" id="3.30.2130.30">
    <property type="match status" value="1"/>
</dbReference>
<dbReference type="Gene3D" id="3.30.750.80">
    <property type="entry name" value="RNA methyltransferase domain (HRMD) like"/>
    <property type="match status" value="1"/>
</dbReference>
<dbReference type="Gene3D" id="3.40.50.150">
    <property type="entry name" value="Vaccinia Virus protein VP39"/>
    <property type="match status" value="2"/>
</dbReference>
<dbReference type="HAMAP" id="MF_01858">
    <property type="entry name" value="23SrRNA_methyltr_KL"/>
    <property type="match status" value="1"/>
</dbReference>
<dbReference type="InterPro" id="IPR017244">
    <property type="entry name" value="23SrRNA_methyltr_KL"/>
</dbReference>
<dbReference type="InterPro" id="IPR002052">
    <property type="entry name" value="DNA_methylase_N6_adenine_CS"/>
</dbReference>
<dbReference type="InterPro" id="IPR000241">
    <property type="entry name" value="RlmKL-like_Mtase"/>
</dbReference>
<dbReference type="InterPro" id="IPR053943">
    <property type="entry name" value="RlmKL-like_Mtase_CS"/>
</dbReference>
<dbReference type="InterPro" id="IPR054170">
    <property type="entry name" value="RlmL_1st"/>
</dbReference>
<dbReference type="InterPro" id="IPR019614">
    <property type="entry name" value="SAM-dep_methyl-trfase"/>
</dbReference>
<dbReference type="InterPro" id="IPR029063">
    <property type="entry name" value="SAM-dependent_MTases_sf"/>
</dbReference>
<dbReference type="InterPro" id="IPR004114">
    <property type="entry name" value="THUMP_dom"/>
</dbReference>
<dbReference type="NCBIfam" id="NF008748">
    <property type="entry name" value="PRK11783.1"/>
    <property type="match status" value="1"/>
</dbReference>
<dbReference type="PANTHER" id="PTHR47313">
    <property type="entry name" value="RIBOSOMAL RNA LARGE SUBUNIT METHYLTRANSFERASE K/L"/>
    <property type="match status" value="1"/>
</dbReference>
<dbReference type="PANTHER" id="PTHR47313:SF1">
    <property type="entry name" value="RIBOSOMAL RNA LARGE SUBUNIT METHYLTRANSFERASE K_L"/>
    <property type="match status" value="1"/>
</dbReference>
<dbReference type="Pfam" id="PF10672">
    <property type="entry name" value="Methyltrans_SAM"/>
    <property type="match status" value="1"/>
</dbReference>
<dbReference type="Pfam" id="PF22020">
    <property type="entry name" value="RlmL_1st"/>
    <property type="match status" value="1"/>
</dbReference>
<dbReference type="Pfam" id="PF02926">
    <property type="entry name" value="THUMP"/>
    <property type="match status" value="1"/>
</dbReference>
<dbReference type="Pfam" id="PF01170">
    <property type="entry name" value="UPF0020"/>
    <property type="match status" value="1"/>
</dbReference>
<dbReference type="PIRSF" id="PIRSF037618">
    <property type="entry name" value="RNA_Mtase_bacteria_prd"/>
    <property type="match status" value="1"/>
</dbReference>
<dbReference type="PRINTS" id="PR00507">
    <property type="entry name" value="N12N6MTFRASE"/>
</dbReference>
<dbReference type="SMART" id="SM00981">
    <property type="entry name" value="THUMP"/>
    <property type="match status" value="1"/>
</dbReference>
<dbReference type="SUPFAM" id="SSF53335">
    <property type="entry name" value="S-adenosyl-L-methionine-dependent methyltransferases"/>
    <property type="match status" value="2"/>
</dbReference>
<dbReference type="PROSITE" id="PS51165">
    <property type="entry name" value="THUMP"/>
    <property type="match status" value="1"/>
</dbReference>
<dbReference type="PROSITE" id="PS01261">
    <property type="entry name" value="UPF0020"/>
    <property type="match status" value="1"/>
</dbReference>
<evidence type="ECO:0000255" key="1">
    <source>
        <dbReference type="HAMAP-Rule" id="MF_01858"/>
    </source>
</evidence>
<name>RLMKL_ACIBS</name>
<accession>B0VLH0</accession>
<protein>
    <recommendedName>
        <fullName evidence="1">Ribosomal RNA large subunit methyltransferase K/L</fullName>
    </recommendedName>
    <domain>
        <recommendedName>
            <fullName evidence="1">23S rRNA m2G2445 methyltransferase</fullName>
            <ecNumber evidence="1">2.1.1.173</ecNumber>
        </recommendedName>
        <alternativeName>
            <fullName evidence="1">rRNA (guanine-N(2)-)-methyltransferase RlmL</fullName>
        </alternativeName>
    </domain>
    <domain>
        <recommendedName>
            <fullName evidence="1">23S rRNA m7G2069 methyltransferase</fullName>
            <ecNumber evidence="1">2.1.1.264</ecNumber>
        </recommendedName>
        <alternativeName>
            <fullName evidence="1">rRNA (guanine-N(7)-)-methyltransferase RlmK</fullName>
        </alternativeName>
    </domain>
</protein>